<keyword id="KW-0067">ATP-binding</keyword>
<keyword id="KW-0963">Cytoplasm</keyword>
<keyword id="KW-0227">DNA damage</keyword>
<keyword id="KW-0228">DNA excision</keyword>
<keyword id="KW-0234">DNA repair</keyword>
<keyword id="KW-0267">Excision nuclease</keyword>
<keyword id="KW-0547">Nucleotide-binding</keyword>
<keyword id="KW-0742">SOS response</keyword>
<reference key="1">
    <citation type="journal article" date="2002" name="Nature">
        <title>Comparison of the genomes of two Xanthomonas pathogens with differing host specificities.</title>
        <authorList>
            <person name="da Silva A.C.R."/>
            <person name="Ferro J.A."/>
            <person name="Reinach F.C."/>
            <person name="Farah C.S."/>
            <person name="Furlan L.R."/>
            <person name="Quaggio R.B."/>
            <person name="Monteiro-Vitorello C.B."/>
            <person name="Van Sluys M.A."/>
            <person name="Almeida N.F. Jr."/>
            <person name="Alves L.M.C."/>
            <person name="do Amaral A.M."/>
            <person name="Bertolini M.C."/>
            <person name="Camargo L.E.A."/>
            <person name="Camarotte G."/>
            <person name="Cannavan F."/>
            <person name="Cardozo J."/>
            <person name="Chambergo F."/>
            <person name="Ciapina L.P."/>
            <person name="Cicarelli R.M.B."/>
            <person name="Coutinho L.L."/>
            <person name="Cursino-Santos J.R."/>
            <person name="El-Dorry H."/>
            <person name="Faria J.B."/>
            <person name="Ferreira A.J.S."/>
            <person name="Ferreira R.C.C."/>
            <person name="Ferro M.I.T."/>
            <person name="Formighieri E.F."/>
            <person name="Franco M.C."/>
            <person name="Greggio C.C."/>
            <person name="Gruber A."/>
            <person name="Katsuyama A.M."/>
            <person name="Kishi L.T."/>
            <person name="Leite R.P."/>
            <person name="Lemos E.G.M."/>
            <person name="Lemos M.V.F."/>
            <person name="Locali E.C."/>
            <person name="Machado M.A."/>
            <person name="Madeira A.M.B.N."/>
            <person name="Martinez-Rossi N.M."/>
            <person name="Martins E.C."/>
            <person name="Meidanis J."/>
            <person name="Menck C.F.M."/>
            <person name="Miyaki C.Y."/>
            <person name="Moon D.H."/>
            <person name="Moreira L.M."/>
            <person name="Novo M.T.M."/>
            <person name="Okura V.K."/>
            <person name="Oliveira M.C."/>
            <person name="Oliveira V.R."/>
            <person name="Pereira H.A."/>
            <person name="Rossi A."/>
            <person name="Sena J.A.D."/>
            <person name="Silva C."/>
            <person name="de Souza R.F."/>
            <person name="Spinola L.A.F."/>
            <person name="Takita M.A."/>
            <person name="Tamura R.E."/>
            <person name="Teixeira E.C."/>
            <person name="Tezza R.I.D."/>
            <person name="Trindade dos Santos M."/>
            <person name="Truffi D."/>
            <person name="Tsai S.M."/>
            <person name="White F.F."/>
            <person name="Setubal J.C."/>
            <person name="Kitajima J.P."/>
        </authorList>
    </citation>
    <scope>NUCLEOTIDE SEQUENCE [LARGE SCALE GENOMIC DNA]</scope>
    <source>
        <strain>306</strain>
    </source>
</reference>
<feature type="chain" id="PRO_0000138447" description="UvrABC system protein B">
    <location>
        <begin position="1"/>
        <end position="673"/>
    </location>
</feature>
<feature type="domain" description="Helicase ATP-binding" evidence="1">
    <location>
        <begin position="26"/>
        <end position="414"/>
    </location>
</feature>
<feature type="domain" description="Helicase C-terminal" evidence="1">
    <location>
        <begin position="431"/>
        <end position="597"/>
    </location>
</feature>
<feature type="domain" description="UVR" evidence="1">
    <location>
        <begin position="635"/>
        <end position="670"/>
    </location>
</feature>
<feature type="region of interest" description="Disordered" evidence="2">
    <location>
        <begin position="600"/>
        <end position="628"/>
    </location>
</feature>
<feature type="short sequence motif" description="Beta-hairpin">
    <location>
        <begin position="92"/>
        <end position="115"/>
    </location>
</feature>
<feature type="compositionally biased region" description="Basic and acidic residues" evidence="2">
    <location>
        <begin position="600"/>
        <end position="609"/>
    </location>
</feature>
<feature type="compositionally biased region" description="Basic and acidic residues" evidence="2">
    <location>
        <begin position="618"/>
        <end position="628"/>
    </location>
</feature>
<feature type="binding site" evidence="1">
    <location>
        <begin position="39"/>
        <end position="46"/>
    </location>
    <ligand>
        <name>ATP</name>
        <dbReference type="ChEBI" id="CHEBI:30616"/>
    </ligand>
</feature>
<name>UVRB_XANAC</name>
<proteinExistence type="inferred from homology"/>
<gene>
    <name evidence="1" type="primary">uvrB</name>
    <name type="ordered locus">XAC2625</name>
</gene>
<sequence>MTDRFQLVSPYSPAGDQPAAIDKLVANFEAGLAKQTLLGVTGSGKTYTIANVVQQVQRPTLVMAPNKTLAAQLYGEFKSFFPHNAVEYFVSYYDYYQPEAYVPSSDTFIEKDSSINEHIEQMRLSATKTLLSRRDSLVVATVSAIYGLGAPEDYLSLRLILSVGEHIDQRQLIRHLTDLQYTRNEFELTRGAFRVRGEVLDVFPAESDTEALRIELFDGDIEQLTLFDPLTGETLRKLQRYTVYPKTHYATTRERTLSAVDTIKEELKERLEQLYSQNKLVEAQRLAQRTQFDLEMMAEVGFCNGIENYSRHLTGKAPGEPPPTLFDYLPPDALLVIDESHVTIPQIGAMYKGDRSRKETLVEFGFRLPSALDNRPLRFEEWEARSPRSIYVSATPGPYEVRESAGEVTELVVRPTGLIDPVVEIRPVGTQVDDLMSEVHERIKLGDRVLVTTLTKRMAENLTEYLGEHGIRVRYLHSDIDTVERVEIIRDLRLGKFDVLVGINLLREGLDMPEVSLVAILDADKEGFLRSTGSLIQTIGRAARNLRGKAILYADKMTRSMQAAIDETDRRREKQVEYNLEHGITPKSVERPIADIMEGARDDAAEKKSGKGRSKSRHVAEETPDYRAMKPAEIAGKLKSLEQKMYQHAKDLEFEAAAQIRDQIQKLKAASLG</sequence>
<protein>
    <recommendedName>
        <fullName evidence="1">UvrABC system protein B</fullName>
        <shortName evidence="1">Protein UvrB</shortName>
    </recommendedName>
    <alternativeName>
        <fullName evidence="1">Excinuclease ABC subunit B</fullName>
    </alternativeName>
</protein>
<accession>Q8PJB1</accession>
<organism>
    <name type="scientific">Xanthomonas axonopodis pv. citri (strain 306)</name>
    <dbReference type="NCBI Taxonomy" id="190486"/>
    <lineage>
        <taxon>Bacteria</taxon>
        <taxon>Pseudomonadati</taxon>
        <taxon>Pseudomonadota</taxon>
        <taxon>Gammaproteobacteria</taxon>
        <taxon>Lysobacterales</taxon>
        <taxon>Lysobacteraceae</taxon>
        <taxon>Xanthomonas</taxon>
    </lineage>
</organism>
<dbReference type="EMBL" id="AE008923">
    <property type="protein sequence ID" value="AAM37473.1"/>
    <property type="molecule type" value="Genomic_DNA"/>
</dbReference>
<dbReference type="RefSeq" id="WP_011051720.1">
    <property type="nucleotide sequence ID" value="NC_003919.1"/>
</dbReference>
<dbReference type="SMR" id="Q8PJB1"/>
<dbReference type="GeneID" id="66911725"/>
<dbReference type="KEGG" id="xac:XAC2625"/>
<dbReference type="eggNOG" id="COG0556">
    <property type="taxonomic scope" value="Bacteria"/>
</dbReference>
<dbReference type="HOGENOM" id="CLU_009621_2_1_6"/>
<dbReference type="Proteomes" id="UP000000576">
    <property type="component" value="Chromosome"/>
</dbReference>
<dbReference type="GO" id="GO:0005737">
    <property type="term" value="C:cytoplasm"/>
    <property type="evidence" value="ECO:0007669"/>
    <property type="project" value="UniProtKB-SubCell"/>
</dbReference>
<dbReference type="GO" id="GO:0009380">
    <property type="term" value="C:excinuclease repair complex"/>
    <property type="evidence" value="ECO:0007669"/>
    <property type="project" value="InterPro"/>
</dbReference>
<dbReference type="GO" id="GO:0005524">
    <property type="term" value="F:ATP binding"/>
    <property type="evidence" value="ECO:0007669"/>
    <property type="project" value="UniProtKB-UniRule"/>
</dbReference>
<dbReference type="GO" id="GO:0016887">
    <property type="term" value="F:ATP hydrolysis activity"/>
    <property type="evidence" value="ECO:0007669"/>
    <property type="project" value="InterPro"/>
</dbReference>
<dbReference type="GO" id="GO:0003677">
    <property type="term" value="F:DNA binding"/>
    <property type="evidence" value="ECO:0007669"/>
    <property type="project" value="UniProtKB-UniRule"/>
</dbReference>
<dbReference type="GO" id="GO:0009381">
    <property type="term" value="F:excinuclease ABC activity"/>
    <property type="evidence" value="ECO:0007669"/>
    <property type="project" value="UniProtKB-UniRule"/>
</dbReference>
<dbReference type="GO" id="GO:0006289">
    <property type="term" value="P:nucleotide-excision repair"/>
    <property type="evidence" value="ECO:0007669"/>
    <property type="project" value="UniProtKB-UniRule"/>
</dbReference>
<dbReference type="GO" id="GO:0009432">
    <property type="term" value="P:SOS response"/>
    <property type="evidence" value="ECO:0007669"/>
    <property type="project" value="UniProtKB-UniRule"/>
</dbReference>
<dbReference type="CDD" id="cd17916">
    <property type="entry name" value="DEXHc_UvrB"/>
    <property type="match status" value="1"/>
</dbReference>
<dbReference type="CDD" id="cd18790">
    <property type="entry name" value="SF2_C_UvrB"/>
    <property type="match status" value="1"/>
</dbReference>
<dbReference type="FunFam" id="3.40.50.300:FF:000477">
    <property type="entry name" value="UvrABC system protein B"/>
    <property type="match status" value="1"/>
</dbReference>
<dbReference type="Gene3D" id="6.10.140.240">
    <property type="match status" value="1"/>
</dbReference>
<dbReference type="Gene3D" id="3.40.50.300">
    <property type="entry name" value="P-loop containing nucleotide triphosphate hydrolases"/>
    <property type="match status" value="3"/>
</dbReference>
<dbReference type="Gene3D" id="4.10.860.10">
    <property type="entry name" value="UVR domain"/>
    <property type="match status" value="1"/>
</dbReference>
<dbReference type="HAMAP" id="MF_00204">
    <property type="entry name" value="UvrB"/>
    <property type="match status" value="1"/>
</dbReference>
<dbReference type="InterPro" id="IPR006935">
    <property type="entry name" value="Helicase/UvrB_N"/>
</dbReference>
<dbReference type="InterPro" id="IPR014001">
    <property type="entry name" value="Helicase_ATP-bd"/>
</dbReference>
<dbReference type="InterPro" id="IPR001650">
    <property type="entry name" value="Helicase_C-like"/>
</dbReference>
<dbReference type="InterPro" id="IPR027417">
    <property type="entry name" value="P-loop_NTPase"/>
</dbReference>
<dbReference type="InterPro" id="IPR001943">
    <property type="entry name" value="UVR_dom"/>
</dbReference>
<dbReference type="InterPro" id="IPR036876">
    <property type="entry name" value="UVR_dom_sf"/>
</dbReference>
<dbReference type="InterPro" id="IPR004807">
    <property type="entry name" value="UvrB"/>
</dbReference>
<dbReference type="InterPro" id="IPR041471">
    <property type="entry name" value="UvrB_inter"/>
</dbReference>
<dbReference type="InterPro" id="IPR024759">
    <property type="entry name" value="UvrB_YAD/RRR_dom"/>
</dbReference>
<dbReference type="NCBIfam" id="NF003673">
    <property type="entry name" value="PRK05298.1"/>
    <property type="match status" value="1"/>
</dbReference>
<dbReference type="NCBIfam" id="TIGR00631">
    <property type="entry name" value="uvrb"/>
    <property type="match status" value="1"/>
</dbReference>
<dbReference type="PANTHER" id="PTHR24029">
    <property type="entry name" value="UVRABC SYSTEM PROTEIN B"/>
    <property type="match status" value="1"/>
</dbReference>
<dbReference type="PANTHER" id="PTHR24029:SF0">
    <property type="entry name" value="UVRABC SYSTEM PROTEIN B"/>
    <property type="match status" value="1"/>
</dbReference>
<dbReference type="Pfam" id="PF00271">
    <property type="entry name" value="Helicase_C"/>
    <property type="match status" value="1"/>
</dbReference>
<dbReference type="Pfam" id="PF04851">
    <property type="entry name" value="ResIII"/>
    <property type="match status" value="1"/>
</dbReference>
<dbReference type="Pfam" id="PF02151">
    <property type="entry name" value="UVR"/>
    <property type="match status" value="1"/>
</dbReference>
<dbReference type="Pfam" id="PF12344">
    <property type="entry name" value="UvrB"/>
    <property type="match status" value="1"/>
</dbReference>
<dbReference type="Pfam" id="PF17757">
    <property type="entry name" value="UvrB_inter"/>
    <property type="match status" value="1"/>
</dbReference>
<dbReference type="SMART" id="SM00487">
    <property type="entry name" value="DEXDc"/>
    <property type="match status" value="1"/>
</dbReference>
<dbReference type="SMART" id="SM00490">
    <property type="entry name" value="HELICc"/>
    <property type="match status" value="1"/>
</dbReference>
<dbReference type="SUPFAM" id="SSF46600">
    <property type="entry name" value="C-terminal UvrC-binding domain of UvrB"/>
    <property type="match status" value="1"/>
</dbReference>
<dbReference type="SUPFAM" id="SSF52540">
    <property type="entry name" value="P-loop containing nucleoside triphosphate hydrolases"/>
    <property type="match status" value="2"/>
</dbReference>
<dbReference type="PROSITE" id="PS51192">
    <property type="entry name" value="HELICASE_ATP_BIND_1"/>
    <property type="match status" value="1"/>
</dbReference>
<dbReference type="PROSITE" id="PS51194">
    <property type="entry name" value="HELICASE_CTER"/>
    <property type="match status" value="1"/>
</dbReference>
<dbReference type="PROSITE" id="PS50151">
    <property type="entry name" value="UVR"/>
    <property type="match status" value="1"/>
</dbReference>
<evidence type="ECO:0000255" key="1">
    <source>
        <dbReference type="HAMAP-Rule" id="MF_00204"/>
    </source>
</evidence>
<evidence type="ECO:0000256" key="2">
    <source>
        <dbReference type="SAM" id="MobiDB-lite"/>
    </source>
</evidence>
<comment type="function">
    <text evidence="1">The UvrABC repair system catalyzes the recognition and processing of DNA lesions. A damage recognition complex composed of 2 UvrA and 2 UvrB subunits scans DNA for abnormalities. Upon binding of the UvrA(2)B(2) complex to a putative damaged site, the DNA wraps around one UvrB monomer. DNA wrap is dependent on ATP binding by UvrB and probably causes local melting of the DNA helix, facilitating insertion of UvrB beta-hairpin between the DNA strands. Then UvrB probes one DNA strand for the presence of a lesion. If a lesion is found the UvrA subunits dissociate and the UvrB-DNA preincision complex is formed. This complex is subsequently bound by UvrC and the second UvrB is released. If no lesion is found, the DNA wraps around the other UvrB subunit that will check the other stand for damage.</text>
</comment>
<comment type="subunit">
    <text evidence="1">Forms a heterotetramer with UvrA during the search for lesions. Interacts with UvrC in an incision complex.</text>
</comment>
<comment type="subcellular location">
    <subcellularLocation>
        <location evidence="1">Cytoplasm</location>
    </subcellularLocation>
</comment>
<comment type="domain">
    <text evidence="1">The beta-hairpin motif is involved in DNA binding.</text>
</comment>
<comment type="similarity">
    <text evidence="1">Belongs to the UvrB family.</text>
</comment>